<name>PSS_HAEIN</name>
<reference key="1">
    <citation type="journal article" date="1995" name="Science">
        <title>Whole-genome random sequencing and assembly of Haemophilus influenzae Rd.</title>
        <authorList>
            <person name="Fleischmann R.D."/>
            <person name="Adams M.D."/>
            <person name="White O."/>
            <person name="Clayton R.A."/>
            <person name="Kirkness E.F."/>
            <person name="Kerlavage A.R."/>
            <person name="Bult C.J."/>
            <person name="Tomb J.-F."/>
            <person name="Dougherty B.A."/>
            <person name="Merrick J.M."/>
            <person name="McKenney K."/>
            <person name="Sutton G.G."/>
            <person name="FitzHugh W."/>
            <person name="Fields C.A."/>
            <person name="Gocayne J.D."/>
            <person name="Scott J.D."/>
            <person name="Shirley R."/>
            <person name="Liu L.-I."/>
            <person name="Glodek A."/>
            <person name="Kelley J.M."/>
            <person name="Weidman J.F."/>
            <person name="Phillips C.A."/>
            <person name="Spriggs T."/>
            <person name="Hedblom E."/>
            <person name="Cotton M.D."/>
            <person name="Utterback T.R."/>
            <person name="Hanna M.C."/>
            <person name="Nguyen D.T."/>
            <person name="Saudek D.M."/>
            <person name="Brandon R.C."/>
            <person name="Fine L.D."/>
            <person name="Fritchman J.L."/>
            <person name="Fuhrmann J.L."/>
            <person name="Geoghagen N.S.M."/>
            <person name="Gnehm C.L."/>
            <person name="McDonald L.A."/>
            <person name="Small K.V."/>
            <person name="Fraser C.M."/>
            <person name="Smith H.O."/>
            <person name="Venter J.C."/>
        </authorList>
    </citation>
    <scope>NUCLEOTIDE SEQUENCE [LARGE SCALE GENOMIC DNA]</scope>
    <source>
        <strain>ATCC 51907 / DSM 11121 / KW20 / Rd</strain>
    </source>
</reference>
<protein>
    <recommendedName>
        <fullName>CDP-diacylglycerol--serine O-phosphatidyltransferase</fullName>
        <ecNumber>2.7.8.8</ecNumber>
    </recommendedName>
    <alternativeName>
        <fullName>Phosphatidylserine synthase</fullName>
    </alternativeName>
</protein>
<comment type="catalytic activity">
    <reaction>
        <text>a CDP-1,2-diacyl-sn-glycerol + L-serine = a 1,2-diacyl-sn-glycero-3-phospho-L-serine + CMP + H(+)</text>
        <dbReference type="Rhea" id="RHEA:16913"/>
        <dbReference type="ChEBI" id="CHEBI:15378"/>
        <dbReference type="ChEBI" id="CHEBI:33384"/>
        <dbReference type="ChEBI" id="CHEBI:57262"/>
        <dbReference type="ChEBI" id="CHEBI:58332"/>
        <dbReference type="ChEBI" id="CHEBI:60377"/>
        <dbReference type="EC" id="2.7.8.8"/>
    </reaction>
</comment>
<comment type="subunit">
    <text>Multimeric.</text>
</comment>
<comment type="subcellular location">
    <subcellularLocation>
        <location>Cytoplasm</location>
    </subcellularLocation>
    <subcellularLocation>
        <location evidence="1">Cell inner membrane</location>
        <topology evidence="1">Peripheral membrane protein</topology>
        <orientation evidence="1">Cytoplasmic side</orientation>
    </subcellularLocation>
</comment>
<comment type="similarity">
    <text evidence="3">Belongs to the CDP-alcohol phosphatidyltransferase class-II family.</text>
</comment>
<feature type="chain" id="PRO_0000056825" description="CDP-diacylglycerol--serine O-phosphatidyltransferase">
    <location>
        <begin position="1"/>
        <end position="455"/>
    </location>
</feature>
<feature type="domain" description="PLD phosphodiesterase 1" evidence="2">
    <location>
        <begin position="134"/>
        <end position="160"/>
    </location>
</feature>
<feature type="domain" description="PLD phosphodiesterase 2" evidence="2">
    <location>
        <begin position="356"/>
        <end position="383"/>
    </location>
</feature>
<feature type="helix" evidence="4">
    <location>
        <begin position="5"/>
        <end position="14"/>
    </location>
</feature>
<feature type="strand" evidence="4">
    <location>
        <begin position="18"/>
        <end position="20"/>
    </location>
</feature>
<feature type="helix" evidence="4">
    <location>
        <begin position="23"/>
        <end position="25"/>
    </location>
</feature>
<feature type="strand" evidence="4">
    <location>
        <begin position="26"/>
        <end position="28"/>
    </location>
</feature>
<feature type="helix" evidence="4">
    <location>
        <begin position="32"/>
        <end position="44"/>
    </location>
</feature>
<feature type="strand" evidence="4">
    <location>
        <begin position="47"/>
        <end position="55"/>
    </location>
</feature>
<feature type="helix" evidence="4">
    <location>
        <begin position="61"/>
        <end position="76"/>
    </location>
</feature>
<feature type="strand" evidence="4">
    <location>
        <begin position="81"/>
        <end position="87"/>
    </location>
</feature>
<feature type="helix" evidence="4">
    <location>
        <begin position="90"/>
        <end position="92"/>
    </location>
</feature>
<feature type="helix" evidence="4">
    <location>
        <begin position="104"/>
        <end position="115"/>
    </location>
</feature>
<feature type="strand" evidence="4">
    <location>
        <begin position="124"/>
        <end position="127"/>
    </location>
</feature>
<feature type="strand" evidence="4">
    <location>
        <begin position="129"/>
        <end position="132"/>
    </location>
</feature>
<feature type="helix" evidence="4">
    <location>
        <begin position="133"/>
        <end position="135"/>
    </location>
</feature>
<feature type="strand" evidence="4">
    <location>
        <begin position="142"/>
        <end position="145"/>
    </location>
</feature>
<feature type="strand" evidence="4">
    <location>
        <begin position="148"/>
        <end position="153"/>
    </location>
</feature>
<feature type="turn" evidence="4">
    <location>
        <begin position="158"/>
        <end position="162"/>
    </location>
</feature>
<feature type="strand" evidence="4">
    <location>
        <begin position="172"/>
        <end position="176"/>
    </location>
</feature>
<feature type="helix" evidence="4">
    <location>
        <begin position="178"/>
        <end position="190"/>
    </location>
</feature>
<feature type="turn" evidence="4">
    <location>
        <begin position="195"/>
        <end position="197"/>
    </location>
</feature>
<feature type="strand" evidence="4">
    <location>
        <begin position="199"/>
        <end position="204"/>
    </location>
</feature>
<feature type="helix" evidence="4">
    <location>
        <begin position="209"/>
        <end position="211"/>
    </location>
</feature>
<feature type="helix" evidence="4">
    <location>
        <begin position="213"/>
        <end position="226"/>
    </location>
</feature>
<feature type="strand" evidence="4">
    <location>
        <begin position="235"/>
        <end position="237"/>
    </location>
</feature>
<feature type="strand" evidence="4">
    <location>
        <begin position="242"/>
        <end position="253"/>
    </location>
</feature>
<feature type="helix" evidence="4">
    <location>
        <begin position="255"/>
        <end position="265"/>
    </location>
</feature>
<feature type="strand" evidence="4">
    <location>
        <begin position="268"/>
        <end position="274"/>
    </location>
</feature>
<feature type="strand" evidence="4">
    <location>
        <begin position="276"/>
        <end position="278"/>
    </location>
</feature>
<feature type="helix" evidence="4">
    <location>
        <begin position="282"/>
        <end position="292"/>
    </location>
</feature>
<feature type="turn" evidence="4">
    <location>
        <begin position="293"/>
        <end position="295"/>
    </location>
</feature>
<feature type="strand" evidence="4">
    <location>
        <begin position="297"/>
        <end position="303"/>
    </location>
</feature>
<feature type="helix" evidence="4">
    <location>
        <begin position="305"/>
        <end position="307"/>
    </location>
</feature>
<feature type="helix" evidence="4">
    <location>
        <begin position="320"/>
        <end position="323"/>
    </location>
</feature>
<feature type="helix" evidence="4">
    <location>
        <begin position="324"/>
        <end position="338"/>
    </location>
</feature>
<feature type="helix" evidence="4">
    <location>
        <begin position="340"/>
        <end position="345"/>
    </location>
</feature>
<feature type="strand" evidence="4">
    <location>
        <begin position="346"/>
        <end position="353"/>
    </location>
</feature>
<feature type="strand" evidence="4">
    <location>
        <begin position="358"/>
        <end position="360"/>
    </location>
</feature>
<feature type="strand" evidence="4">
    <location>
        <begin position="364"/>
        <end position="367"/>
    </location>
</feature>
<feature type="turn" evidence="4">
    <location>
        <begin position="368"/>
        <end position="370"/>
    </location>
</feature>
<feature type="strand" evidence="4">
    <location>
        <begin position="371"/>
        <end position="375"/>
    </location>
</feature>
<feature type="helix" evidence="4">
    <location>
        <begin position="381"/>
        <end position="385"/>
    </location>
</feature>
<feature type="strand" evidence="4">
    <location>
        <begin position="388"/>
        <end position="395"/>
    </location>
</feature>
<feature type="helix" evidence="4">
    <location>
        <begin position="402"/>
        <end position="413"/>
    </location>
</feature>
<feature type="strand" evidence="4">
    <location>
        <begin position="416"/>
        <end position="418"/>
    </location>
</feature>
<feature type="helix" evidence="4">
    <location>
        <begin position="422"/>
        <end position="424"/>
    </location>
</feature>
<feature type="helix" evidence="4">
    <location>
        <begin position="428"/>
        <end position="430"/>
    </location>
</feature>
<feature type="helix" evidence="4">
    <location>
        <begin position="433"/>
        <end position="444"/>
    </location>
</feature>
<feature type="helix" evidence="4">
    <location>
        <begin position="447"/>
        <end position="454"/>
    </location>
</feature>
<gene>
    <name type="primary">pssA</name>
    <name type="ordered locus">HI_0425</name>
</gene>
<sequence>MLINKTKRAEQNLNNLPFLALQAEQIEFLGSSAEFKTQIIELIRNAKKRIYVTALYWQKDEAGQEILDEIYRVKQENPHLDVKVLIDWHRAQRNLLGAEKSATNADWYCEQRQTYQLPDDPNMFFGVPINTREVFGVLHVKGFVFDDTVLYSGASINNVYLHQFEKYRYDRYQKITHAELADSMVNFINDYLLDFSAVYPLDVTNRPRTKEIRGNIRAYRKDLAQNGEYSLKSAVKLPNVLSVSPLFGLGASGNELNQVIEDLFLQVQKKLVICTPYFNFPRTLQHKIATLLENGKRVEIIVGDKVANDFYIPPEQPFKMAGALPYLYESNLRRFCEKFETQIESGQLVVRLWRDGDNTYHLKGVWVDDRYILLTGNNLNPRAWRLDAENGLLIYDPQQQLLAQVEKEQNQIRQHTKVLKHYTELEELNQYPEPVQKLLKKFARIKADKLVKMIL</sequence>
<organism>
    <name type="scientific">Haemophilus influenzae (strain ATCC 51907 / DSM 11121 / KW20 / Rd)</name>
    <dbReference type="NCBI Taxonomy" id="71421"/>
    <lineage>
        <taxon>Bacteria</taxon>
        <taxon>Pseudomonadati</taxon>
        <taxon>Pseudomonadota</taxon>
        <taxon>Gammaproteobacteria</taxon>
        <taxon>Pasteurellales</taxon>
        <taxon>Pasteurellaceae</taxon>
        <taxon>Haemophilus</taxon>
    </lineage>
</organism>
<accession>P44704</accession>
<dbReference type="EC" id="2.7.8.8"/>
<dbReference type="EMBL" id="L42023">
    <property type="protein sequence ID" value="AAC22084.1"/>
    <property type="molecule type" value="Genomic_DNA"/>
</dbReference>
<dbReference type="PIR" id="I64066">
    <property type="entry name" value="I64066"/>
</dbReference>
<dbReference type="RefSeq" id="NP_438586.1">
    <property type="nucleotide sequence ID" value="NC_000907.1"/>
</dbReference>
<dbReference type="PDB" id="3HSI">
    <property type="method" value="X-ray"/>
    <property type="resolution" value="2.20 A"/>
    <property type="chains" value="A/B/C=1-455"/>
</dbReference>
<dbReference type="PDBsum" id="3HSI"/>
<dbReference type="SMR" id="P44704"/>
<dbReference type="STRING" id="71421.HI_0425"/>
<dbReference type="DNASU" id="950510"/>
<dbReference type="EnsemblBacteria" id="AAC22084">
    <property type="protein sequence ID" value="AAC22084"/>
    <property type="gene ID" value="HI_0425"/>
</dbReference>
<dbReference type="KEGG" id="hin:HI_0425"/>
<dbReference type="PATRIC" id="fig|71421.8.peg.445"/>
<dbReference type="eggNOG" id="COG1502">
    <property type="taxonomic scope" value="Bacteria"/>
</dbReference>
<dbReference type="HOGENOM" id="CLU_051350_1_0_6"/>
<dbReference type="OrthoDB" id="8543662at2"/>
<dbReference type="PhylomeDB" id="P44704"/>
<dbReference type="BioCyc" id="HINF71421:G1GJ1-440-MONOMER"/>
<dbReference type="EvolutionaryTrace" id="P44704"/>
<dbReference type="Proteomes" id="UP000000579">
    <property type="component" value="Chromosome"/>
</dbReference>
<dbReference type="GO" id="GO:0005829">
    <property type="term" value="C:cytosol"/>
    <property type="evidence" value="ECO:0000318"/>
    <property type="project" value="GO_Central"/>
</dbReference>
<dbReference type="GO" id="GO:0005886">
    <property type="term" value="C:plasma membrane"/>
    <property type="evidence" value="ECO:0007669"/>
    <property type="project" value="UniProtKB-SubCell"/>
</dbReference>
<dbReference type="GO" id="GO:0008444">
    <property type="term" value="F:CDP-diacylglycerol-glycerol-3-phosphate 3-phosphatidyltransferase activity"/>
    <property type="evidence" value="ECO:0007669"/>
    <property type="project" value="InterPro"/>
</dbReference>
<dbReference type="GO" id="GO:0003882">
    <property type="term" value="F:CDP-diacylglycerol-serine O-phosphatidyltransferase activity"/>
    <property type="evidence" value="ECO:0000318"/>
    <property type="project" value="GO_Central"/>
</dbReference>
<dbReference type="GO" id="GO:0032049">
    <property type="term" value="P:cardiolipin biosynthetic process"/>
    <property type="evidence" value="ECO:0007669"/>
    <property type="project" value="InterPro"/>
</dbReference>
<dbReference type="CDD" id="cd09134">
    <property type="entry name" value="PLDc_PSS_G_neg_1"/>
    <property type="match status" value="1"/>
</dbReference>
<dbReference type="CDD" id="cd09136">
    <property type="entry name" value="PLDc_PSS_G_neg_2"/>
    <property type="match status" value="1"/>
</dbReference>
<dbReference type="Gene3D" id="3.30.870.10">
    <property type="entry name" value="Endonuclease Chain A"/>
    <property type="match status" value="2"/>
</dbReference>
<dbReference type="InterPro" id="IPR016270">
    <property type="entry name" value="PGS1"/>
</dbReference>
<dbReference type="InterPro" id="IPR025202">
    <property type="entry name" value="PLD-like_dom"/>
</dbReference>
<dbReference type="InterPro" id="IPR001736">
    <property type="entry name" value="PLipase_D/transphosphatidylase"/>
</dbReference>
<dbReference type="NCBIfam" id="NF006946">
    <property type="entry name" value="PRK09428.1"/>
    <property type="match status" value="1"/>
</dbReference>
<dbReference type="PANTHER" id="PTHR12586:SF1">
    <property type="entry name" value="CDP-DIACYLGLYCEROL--GLYCEROL-3-PHOSPHATE 3-PHOSPHATIDYLTRANSFERASE, MITOCHONDRIAL"/>
    <property type="match status" value="1"/>
</dbReference>
<dbReference type="PANTHER" id="PTHR12586">
    <property type="entry name" value="CDP-DIACYLGLYCEROL--SERINE O-PHOSPHATIDYLTRANSFERASE"/>
    <property type="match status" value="1"/>
</dbReference>
<dbReference type="Pfam" id="PF00614">
    <property type="entry name" value="PLDc"/>
    <property type="match status" value="1"/>
</dbReference>
<dbReference type="Pfam" id="PF13091">
    <property type="entry name" value="PLDc_2"/>
    <property type="match status" value="1"/>
</dbReference>
<dbReference type="PIRSF" id="PIRSF000850">
    <property type="entry name" value="Phospholipase_D_PSS"/>
    <property type="match status" value="1"/>
</dbReference>
<dbReference type="SMART" id="SM00155">
    <property type="entry name" value="PLDc"/>
    <property type="match status" value="2"/>
</dbReference>
<dbReference type="SUPFAM" id="SSF56024">
    <property type="entry name" value="Phospholipase D/nuclease"/>
    <property type="match status" value="2"/>
</dbReference>
<dbReference type="PROSITE" id="PS50035">
    <property type="entry name" value="PLD"/>
    <property type="match status" value="1"/>
</dbReference>
<proteinExistence type="evidence at protein level"/>
<keyword id="KW-0002">3D-structure</keyword>
<keyword id="KW-0997">Cell inner membrane</keyword>
<keyword id="KW-1003">Cell membrane</keyword>
<keyword id="KW-0963">Cytoplasm</keyword>
<keyword id="KW-0444">Lipid biosynthesis</keyword>
<keyword id="KW-0443">Lipid metabolism</keyword>
<keyword id="KW-0472">Membrane</keyword>
<keyword id="KW-0594">Phospholipid biosynthesis</keyword>
<keyword id="KW-1208">Phospholipid metabolism</keyword>
<keyword id="KW-1185">Reference proteome</keyword>
<keyword id="KW-0677">Repeat</keyword>
<keyword id="KW-0808">Transferase</keyword>
<evidence type="ECO:0000250" key="1"/>
<evidence type="ECO:0000255" key="2">
    <source>
        <dbReference type="PROSITE-ProRule" id="PRU00153"/>
    </source>
</evidence>
<evidence type="ECO:0000305" key="3"/>
<evidence type="ECO:0007829" key="4">
    <source>
        <dbReference type="PDB" id="3HSI"/>
    </source>
</evidence>